<name>CHEY_LISMO</name>
<organism>
    <name type="scientific">Listeria monocytogenes serovar 1/2a (strain ATCC BAA-679 / EGD-e)</name>
    <dbReference type="NCBI Taxonomy" id="169963"/>
    <lineage>
        <taxon>Bacteria</taxon>
        <taxon>Bacillati</taxon>
        <taxon>Bacillota</taxon>
        <taxon>Bacilli</taxon>
        <taxon>Bacillales</taxon>
        <taxon>Listeriaceae</taxon>
        <taxon>Listeria</taxon>
    </lineage>
</organism>
<proteinExistence type="inferred from homology"/>
<comment type="function">
    <text evidence="2">Involved in the transmission of sensory signals from the chemoreceptors to the flagellar motors. CheY seems to regulate the clockwise (CW) rotation (By similarity).</text>
</comment>
<comment type="cofactor">
    <cofactor evidence="2">
        <name>Mg(2+)</name>
        <dbReference type="ChEBI" id="CHEBI:18420"/>
    </cofactor>
    <text evidence="2">Binds 1 Mg(2+) ion per subunit.</text>
</comment>
<comment type="subcellular location">
    <subcellularLocation>
        <location evidence="5">Cytoplasm</location>
    </subcellularLocation>
</comment>
<comment type="PTM">
    <text evidence="2">Phosphorylated by CheA.</text>
</comment>
<feature type="chain" id="PRO_0000081053" description="Chemotaxis protein CheY">
    <location>
        <begin position="1"/>
        <end position="119"/>
    </location>
</feature>
<feature type="domain" description="Response regulatory" evidence="4">
    <location>
        <begin position="3"/>
        <end position="118"/>
    </location>
</feature>
<feature type="binding site" evidence="1">
    <location>
        <position position="8"/>
    </location>
    <ligand>
        <name>Mg(2+)</name>
        <dbReference type="ChEBI" id="CHEBI:18420"/>
    </ligand>
</feature>
<feature type="binding site" evidence="2">
    <location>
        <position position="9"/>
    </location>
    <ligand>
        <name>Mg(2+)</name>
        <dbReference type="ChEBI" id="CHEBI:18420"/>
    </ligand>
</feature>
<feature type="binding site" evidence="2">
    <location>
        <position position="53"/>
    </location>
    <ligand>
        <name>Mg(2+)</name>
        <dbReference type="ChEBI" id="CHEBI:18420"/>
    </ligand>
</feature>
<feature type="binding site" evidence="3">
    <location>
        <position position="55"/>
    </location>
    <ligand>
        <name>Mg(2+)</name>
        <dbReference type="ChEBI" id="CHEBI:18420"/>
    </ligand>
</feature>
<feature type="modified residue" description="4-aspartylphosphate" evidence="4">
    <location>
        <position position="53"/>
    </location>
</feature>
<dbReference type="EMBL" id="X76170">
    <property type="protein sequence ID" value="CAA53764.1"/>
    <property type="molecule type" value="Genomic_DNA"/>
</dbReference>
<dbReference type="EMBL" id="AL591976">
    <property type="protein sequence ID" value="CAC98769.1"/>
    <property type="molecule type" value="Genomic_DNA"/>
</dbReference>
<dbReference type="PIR" id="AC1161">
    <property type="entry name" value="AC1161"/>
</dbReference>
<dbReference type="RefSeq" id="NP_464218.1">
    <property type="nucleotide sequence ID" value="NC_003210.1"/>
</dbReference>
<dbReference type="RefSeq" id="WP_003721812.1">
    <property type="nucleotide sequence ID" value="NZ_CP149495.1"/>
</dbReference>
<dbReference type="SMR" id="P0A4H5"/>
<dbReference type="STRING" id="169963.gene:17593342"/>
<dbReference type="PaxDb" id="169963-lmo0691"/>
<dbReference type="EnsemblBacteria" id="CAC98769">
    <property type="protein sequence ID" value="CAC98769"/>
    <property type="gene ID" value="CAC98769"/>
</dbReference>
<dbReference type="GeneID" id="985049"/>
<dbReference type="KEGG" id="lmo:lmo0691"/>
<dbReference type="PATRIC" id="fig|169963.11.peg.712"/>
<dbReference type="eggNOG" id="COG2201">
    <property type="taxonomic scope" value="Bacteria"/>
</dbReference>
<dbReference type="HOGENOM" id="CLU_000445_69_15_9"/>
<dbReference type="OrthoDB" id="9790669at2"/>
<dbReference type="PhylomeDB" id="P0A4H5"/>
<dbReference type="BioCyc" id="LMON169963:LMO0691-MONOMER"/>
<dbReference type="Proteomes" id="UP000000817">
    <property type="component" value="Chromosome"/>
</dbReference>
<dbReference type="GO" id="GO:0005737">
    <property type="term" value="C:cytoplasm"/>
    <property type="evidence" value="ECO:0007669"/>
    <property type="project" value="UniProtKB-SubCell"/>
</dbReference>
<dbReference type="GO" id="GO:0046872">
    <property type="term" value="F:metal ion binding"/>
    <property type="evidence" value="ECO:0007669"/>
    <property type="project" value="UniProtKB-KW"/>
</dbReference>
<dbReference type="GO" id="GO:0097588">
    <property type="term" value="P:archaeal or bacterial-type flagellum-dependent cell motility"/>
    <property type="evidence" value="ECO:0007669"/>
    <property type="project" value="UniProtKB-KW"/>
</dbReference>
<dbReference type="GO" id="GO:0006935">
    <property type="term" value="P:chemotaxis"/>
    <property type="evidence" value="ECO:0007669"/>
    <property type="project" value="UniProtKB-KW"/>
</dbReference>
<dbReference type="GO" id="GO:0000160">
    <property type="term" value="P:phosphorelay signal transduction system"/>
    <property type="evidence" value="ECO:0007669"/>
    <property type="project" value="UniProtKB-KW"/>
</dbReference>
<dbReference type="CDD" id="cd17542">
    <property type="entry name" value="REC_CheY"/>
    <property type="match status" value="1"/>
</dbReference>
<dbReference type="Gene3D" id="3.40.50.2300">
    <property type="match status" value="1"/>
</dbReference>
<dbReference type="InterPro" id="IPR011006">
    <property type="entry name" value="CheY-like_superfamily"/>
</dbReference>
<dbReference type="InterPro" id="IPR001789">
    <property type="entry name" value="Sig_transdc_resp-reg_receiver"/>
</dbReference>
<dbReference type="InterPro" id="IPR052048">
    <property type="entry name" value="ST_Response_Regulator"/>
</dbReference>
<dbReference type="PANTHER" id="PTHR43228">
    <property type="entry name" value="TWO-COMPONENT RESPONSE REGULATOR"/>
    <property type="match status" value="1"/>
</dbReference>
<dbReference type="PANTHER" id="PTHR43228:SF1">
    <property type="entry name" value="TWO-COMPONENT RESPONSE REGULATOR ARR22"/>
    <property type="match status" value="1"/>
</dbReference>
<dbReference type="Pfam" id="PF00072">
    <property type="entry name" value="Response_reg"/>
    <property type="match status" value="1"/>
</dbReference>
<dbReference type="SMART" id="SM00448">
    <property type="entry name" value="REC"/>
    <property type="match status" value="1"/>
</dbReference>
<dbReference type="SUPFAM" id="SSF52172">
    <property type="entry name" value="CheY-like"/>
    <property type="match status" value="1"/>
</dbReference>
<dbReference type="PROSITE" id="PS50110">
    <property type="entry name" value="RESPONSE_REGULATORY"/>
    <property type="match status" value="1"/>
</dbReference>
<sequence length="119" mass="13107">MLKLLIVDDAMFMRTMIKNIVKDSDFEVVAEAENGLEAVKKYDEVKPDIVTLDITMPEMDGLEALAQIMAKDPSAKVIMCSAMGQQGMVVDAIKKGAKDFIVKPFQADRVLEALEKAAK</sequence>
<keyword id="KW-0145">Chemotaxis</keyword>
<keyword id="KW-0963">Cytoplasm</keyword>
<keyword id="KW-0283">Flagellar rotation</keyword>
<keyword id="KW-0460">Magnesium</keyword>
<keyword id="KW-0479">Metal-binding</keyword>
<keyword id="KW-0597">Phosphoprotein</keyword>
<keyword id="KW-1185">Reference proteome</keyword>
<keyword id="KW-0902">Two-component regulatory system</keyword>
<reference key="1">
    <citation type="journal article" date="1994" name="DNA Seq.">
        <title>Characterization of two putative Listeria monocytogenes genes encoding polypeptides homologous to the sensor protein CheA and the response regulator CheY of chemotaxis.</title>
        <authorList>
            <person name="Dons L."/>
            <person name="Olsen J.E."/>
            <person name="Rasmussen O.F."/>
        </authorList>
    </citation>
    <scope>NUCLEOTIDE SEQUENCE [GENOMIC DNA]</scope>
    <source>
        <strain>12067</strain>
    </source>
</reference>
<reference key="2">
    <citation type="journal article" date="2001" name="Science">
        <title>Comparative genomics of Listeria species.</title>
        <authorList>
            <person name="Glaser P."/>
            <person name="Frangeul L."/>
            <person name="Buchrieser C."/>
            <person name="Rusniok C."/>
            <person name="Amend A."/>
            <person name="Baquero F."/>
            <person name="Berche P."/>
            <person name="Bloecker H."/>
            <person name="Brandt P."/>
            <person name="Chakraborty T."/>
            <person name="Charbit A."/>
            <person name="Chetouani F."/>
            <person name="Couve E."/>
            <person name="de Daruvar A."/>
            <person name="Dehoux P."/>
            <person name="Domann E."/>
            <person name="Dominguez-Bernal G."/>
            <person name="Duchaud E."/>
            <person name="Durant L."/>
            <person name="Dussurget O."/>
            <person name="Entian K.-D."/>
            <person name="Fsihi H."/>
            <person name="Garcia-del Portillo F."/>
            <person name="Garrido P."/>
            <person name="Gautier L."/>
            <person name="Goebel W."/>
            <person name="Gomez-Lopez N."/>
            <person name="Hain T."/>
            <person name="Hauf J."/>
            <person name="Jackson D."/>
            <person name="Jones L.-M."/>
            <person name="Kaerst U."/>
            <person name="Kreft J."/>
            <person name="Kuhn M."/>
            <person name="Kunst F."/>
            <person name="Kurapkat G."/>
            <person name="Madueno E."/>
            <person name="Maitournam A."/>
            <person name="Mata Vicente J."/>
            <person name="Ng E."/>
            <person name="Nedjari H."/>
            <person name="Nordsiek G."/>
            <person name="Novella S."/>
            <person name="de Pablos B."/>
            <person name="Perez-Diaz J.-C."/>
            <person name="Purcell R."/>
            <person name="Remmel B."/>
            <person name="Rose M."/>
            <person name="Schlueter T."/>
            <person name="Simoes N."/>
            <person name="Tierrez A."/>
            <person name="Vazquez-Boland J.-A."/>
            <person name="Voss H."/>
            <person name="Wehland J."/>
            <person name="Cossart P."/>
        </authorList>
    </citation>
    <scope>NUCLEOTIDE SEQUENCE [LARGE SCALE GENOMIC DNA]</scope>
    <source>
        <strain>ATCC BAA-679 / EGD-e</strain>
    </source>
</reference>
<gene>
    <name type="primary">cheY</name>
    <name type="ordered locus">lmo0691</name>
</gene>
<protein>
    <recommendedName>
        <fullName>Chemotaxis protein CheY</fullName>
    </recommendedName>
</protein>
<evidence type="ECO:0000250" key="1">
    <source>
        <dbReference type="UniProtKB" id="A0A0H3AMJ9"/>
    </source>
</evidence>
<evidence type="ECO:0000250" key="2">
    <source>
        <dbReference type="UniProtKB" id="P0AE67"/>
    </source>
</evidence>
<evidence type="ECO:0000250" key="3">
    <source>
        <dbReference type="UniProtKB" id="Q56312"/>
    </source>
</evidence>
<evidence type="ECO:0000255" key="4">
    <source>
        <dbReference type="PROSITE-ProRule" id="PRU00169"/>
    </source>
</evidence>
<evidence type="ECO:0000305" key="5"/>
<accession>P0A4H5</accession>
<accession>Q48767</accession>